<name>PEDH_PSEPK</name>
<proteinExistence type="evidence at protein level"/>
<reference key="1">
    <citation type="journal article" date="2002" name="Environ. Microbiol.">
        <title>Complete genome sequence and comparative analysis of the metabolically versatile Pseudomonas putida KT2440.</title>
        <authorList>
            <person name="Nelson K.E."/>
            <person name="Weinel C."/>
            <person name="Paulsen I.T."/>
            <person name="Dodson R.J."/>
            <person name="Hilbert H."/>
            <person name="Martins dos Santos V.A.P."/>
            <person name="Fouts D.E."/>
            <person name="Gill S.R."/>
            <person name="Pop M."/>
            <person name="Holmes M."/>
            <person name="Brinkac L.M."/>
            <person name="Beanan M.J."/>
            <person name="DeBoy R.T."/>
            <person name="Daugherty S.C."/>
            <person name="Kolonay J.F."/>
            <person name="Madupu R."/>
            <person name="Nelson W.C."/>
            <person name="White O."/>
            <person name="Peterson J.D."/>
            <person name="Khouri H.M."/>
            <person name="Hance I."/>
            <person name="Chris Lee P."/>
            <person name="Holtzapple E.K."/>
            <person name="Scanlan D."/>
            <person name="Tran K."/>
            <person name="Moazzez A."/>
            <person name="Utterback T.R."/>
            <person name="Rizzo M."/>
            <person name="Lee K."/>
            <person name="Kosack D."/>
            <person name="Moestl D."/>
            <person name="Wedler H."/>
            <person name="Lauber J."/>
            <person name="Stjepandic D."/>
            <person name="Hoheisel J."/>
            <person name="Straetz M."/>
            <person name="Heim S."/>
            <person name="Kiewitz C."/>
            <person name="Eisen J.A."/>
            <person name="Timmis K.N."/>
            <person name="Duesterhoeft A."/>
            <person name="Tuemmler B."/>
            <person name="Fraser C.M."/>
        </authorList>
    </citation>
    <scope>NUCLEOTIDE SEQUENCE [LARGE SCALE GENOMIC DNA]</scope>
    <source>
        <strain>ATCC 47054 / DSM 6125 / CFBP 8728 / NCIMB 11950 / KT2440</strain>
    </source>
</reference>
<reference key="2">
    <citation type="journal article" date="2017" name="MBio">
        <title>Functional Role of Lanthanides in Enzymatic Activity and Transcriptional Regulation of Pyrroloquinoline Quinone-Dependent Alcohol Dehydrogenases in Pseudomonas putida KT2440.</title>
        <authorList>
            <person name="Wehrmann M."/>
            <person name="Billard P."/>
            <person name="Martin-Meriadec A."/>
            <person name="Zegeye A."/>
            <person name="Klebensberger J."/>
        </authorList>
    </citation>
    <scope>FUNCTION</scope>
    <scope>CATALYTIC ACTIVITY</scope>
    <scope>COFACTOR</scope>
    <scope>SUBSTRATE SPECIFICITY</scope>
    <scope>BIOPHYSICOCHEMICAL PROPERTIES</scope>
    <scope>INDUCTION BY LANTHANIDES</scope>
    <scope>DISRUPTION PHENOTYPE</scope>
    <source>
        <strain>ATCC 47054 / DSM 6125 / CFBP 8728 / NCIMB 11950 / KT2440</strain>
    </source>
</reference>
<reference evidence="11 12" key="3">
    <citation type="journal article" date="2020" name="ACS Catal.">
        <title>Engineered PQQ-Dependent Alcohol Dehydrogenase for the Oxidation of 5-(Hydroxymethyl)furoic Acid.</title>
        <authorList>
            <person name="Wehrmann M."/>
            <person name="Elsayed E.M."/>
            <person name="Kobbing S."/>
            <person name="Bendz L."/>
            <person name="Lepak A."/>
            <person name="Schwabe J."/>
            <person name="Wierckx N."/>
            <person name="Bange G."/>
            <person name="Klebensberger J."/>
        </authorList>
    </citation>
    <scope>X-RAY CRYSTALLOGRAPHY (1.65 ANGSTROMS) OF 28-595 OF WILD-TYPE AND MUTANT VAL-412/ALA-561 IN COMPLEX WITH PQQ AND PR(3+)</scope>
    <scope>DISULFIDE BOND</scope>
    <scope>FUNCTION</scope>
    <scope>CATALYTIC ACTIVITY</scope>
    <scope>COFACTOR</scope>
    <scope>PROTEIN ENGINEERING</scope>
    <scope>MUTAGENESIS OF PHE-412 AND TRP-561</scope>
    <scope>BIOTECHNOLOGY</scope>
    <source>
        <strain>ATCC 47054 / DSM 6125 / CFBP 8728 / NCIMB 11950 / KT2440</strain>
    </source>
</reference>
<dbReference type="EC" id="1.1.2.-" evidence="8 9"/>
<dbReference type="EMBL" id="AE015451">
    <property type="protein sequence ID" value="AAN68287.1"/>
    <property type="molecule type" value="Genomic_DNA"/>
</dbReference>
<dbReference type="RefSeq" id="NP_744823.1">
    <property type="nucleotide sequence ID" value="NC_002947.4"/>
</dbReference>
<dbReference type="RefSeq" id="WP_010953598.1">
    <property type="nucleotide sequence ID" value="NZ_CP169744.1"/>
</dbReference>
<dbReference type="PDB" id="6ZCV">
    <property type="method" value="X-ray"/>
    <property type="resolution" value="1.70 A"/>
    <property type="chains" value="A=1-595"/>
</dbReference>
<dbReference type="PDB" id="6ZCW">
    <property type="method" value="X-ray"/>
    <property type="resolution" value="1.65 A"/>
    <property type="chains" value="A=28-595"/>
</dbReference>
<dbReference type="PDBsum" id="6ZCV"/>
<dbReference type="PDBsum" id="6ZCW"/>
<dbReference type="SMR" id="Q88JH0"/>
<dbReference type="STRING" id="160488.PP_2679"/>
<dbReference type="PaxDb" id="160488-PP_2679"/>
<dbReference type="GeneID" id="83680736"/>
<dbReference type="KEGG" id="ppu:PP_2679"/>
<dbReference type="PATRIC" id="fig|160488.4.peg.2841"/>
<dbReference type="eggNOG" id="COG4993">
    <property type="taxonomic scope" value="Bacteria"/>
</dbReference>
<dbReference type="HOGENOM" id="CLU_018478_0_0_6"/>
<dbReference type="OrthoDB" id="9794322at2"/>
<dbReference type="PhylomeDB" id="Q88JH0"/>
<dbReference type="BioCyc" id="PPUT160488:G1G01-2860-MONOMER"/>
<dbReference type="SABIO-RK" id="Q88JH0"/>
<dbReference type="Proteomes" id="UP000000556">
    <property type="component" value="Chromosome"/>
</dbReference>
<dbReference type="GO" id="GO:0016020">
    <property type="term" value="C:membrane"/>
    <property type="evidence" value="ECO:0007669"/>
    <property type="project" value="InterPro"/>
</dbReference>
<dbReference type="GO" id="GO:0030288">
    <property type="term" value="C:outer membrane-bounded periplasmic space"/>
    <property type="evidence" value="ECO:0007669"/>
    <property type="project" value="InterPro"/>
</dbReference>
<dbReference type="GO" id="GO:0052934">
    <property type="term" value="F:alcohol dehydrogenase (cytochrome c) activity"/>
    <property type="evidence" value="ECO:0007669"/>
    <property type="project" value="UniProtKB-EC"/>
</dbReference>
<dbReference type="GO" id="GO:0005509">
    <property type="term" value="F:calcium ion binding"/>
    <property type="evidence" value="ECO:0007669"/>
    <property type="project" value="InterPro"/>
</dbReference>
<dbReference type="CDD" id="cd10277">
    <property type="entry name" value="PQQ_ADH_I"/>
    <property type="match status" value="1"/>
</dbReference>
<dbReference type="FunFam" id="2.140.10.10:FF:000003">
    <property type="entry name" value="Methanol dehydrogenase, large subunit"/>
    <property type="match status" value="1"/>
</dbReference>
<dbReference type="Gene3D" id="2.140.10.10">
    <property type="entry name" value="Quinoprotein alcohol dehydrogenase-like superfamily"/>
    <property type="match status" value="1"/>
</dbReference>
<dbReference type="InterPro" id="IPR034119">
    <property type="entry name" value="ADHI"/>
</dbReference>
<dbReference type="InterPro" id="IPR018391">
    <property type="entry name" value="PQQ_b-propeller_rpt"/>
</dbReference>
<dbReference type="InterPro" id="IPR017512">
    <property type="entry name" value="PQQ_MeOH/EtOH_DH"/>
</dbReference>
<dbReference type="InterPro" id="IPR002372">
    <property type="entry name" value="PQQ_rpt_dom"/>
</dbReference>
<dbReference type="InterPro" id="IPR011047">
    <property type="entry name" value="Quinoprotein_ADH-like_sf"/>
</dbReference>
<dbReference type="InterPro" id="IPR001479">
    <property type="entry name" value="Quinoprotein_DH_CS"/>
</dbReference>
<dbReference type="NCBIfam" id="TIGR03075">
    <property type="entry name" value="PQQ_enz_alc_DH"/>
    <property type="match status" value="1"/>
</dbReference>
<dbReference type="PANTHER" id="PTHR32303">
    <property type="entry name" value="QUINOPROTEIN ALCOHOL DEHYDROGENASE (CYTOCHROME C)"/>
    <property type="match status" value="1"/>
</dbReference>
<dbReference type="PANTHER" id="PTHR32303:SF20">
    <property type="entry name" value="QUINOPROTEIN ETHANOL DEHYDROGENASE"/>
    <property type="match status" value="1"/>
</dbReference>
<dbReference type="Pfam" id="PF01011">
    <property type="entry name" value="PQQ"/>
    <property type="match status" value="1"/>
</dbReference>
<dbReference type="Pfam" id="PF13360">
    <property type="entry name" value="PQQ_2"/>
    <property type="match status" value="1"/>
</dbReference>
<dbReference type="SMART" id="SM00564">
    <property type="entry name" value="PQQ"/>
    <property type="match status" value="6"/>
</dbReference>
<dbReference type="SUPFAM" id="SSF50998">
    <property type="entry name" value="Quinoprotein alcohol dehydrogenase-like"/>
    <property type="match status" value="1"/>
</dbReference>
<dbReference type="PROSITE" id="PS00364">
    <property type="entry name" value="BACTERIAL_PQQ_2"/>
    <property type="match status" value="1"/>
</dbReference>
<accession>Q88JH0</accession>
<feature type="signal peptide" evidence="2">
    <location>
        <begin position="1"/>
        <end position="27"/>
    </location>
</feature>
<feature type="chain" id="PRO_5004302083" description="Quinoprotein alcohol dehydrogenase PedH">
    <location>
        <begin position="28"/>
        <end position="595"/>
    </location>
</feature>
<feature type="active site" description="Proton acceptor" evidence="1">
    <location>
        <position position="323"/>
    </location>
</feature>
<feature type="binding site" evidence="4 11 12">
    <location>
        <position position="87"/>
    </location>
    <ligand>
        <name>pyrroloquinoline quinone</name>
        <dbReference type="ChEBI" id="CHEBI:58442"/>
    </ligand>
</feature>
<feature type="binding site" evidence="4 11 12">
    <location>
        <position position="137"/>
    </location>
    <ligand>
        <name>pyrroloquinoline quinone</name>
        <dbReference type="ChEBI" id="CHEBI:58442"/>
    </ligand>
</feature>
<feature type="binding site" evidence="4 11 12">
    <location>
        <position position="181"/>
    </location>
    <ligand>
        <name>pyrroloquinoline quinone</name>
        <dbReference type="ChEBI" id="CHEBI:58442"/>
    </ligand>
</feature>
<feature type="binding site" evidence="4 11 12">
    <location>
        <position position="197"/>
    </location>
    <ligand>
        <name>pyrroloquinoline quinone</name>
        <dbReference type="ChEBI" id="CHEBI:58442"/>
    </ligand>
</feature>
<feature type="binding site" evidence="4 11 12">
    <location>
        <position position="198"/>
    </location>
    <ligand>
        <name>pyrroloquinoline quinone</name>
        <dbReference type="ChEBI" id="CHEBI:58442"/>
    </ligand>
</feature>
<feature type="binding site" evidence="4 11 12">
    <location>
        <position position="199"/>
    </location>
    <ligand>
        <name>Pr(3+)</name>
        <dbReference type="ChEBI" id="CHEBI:229784"/>
    </ligand>
</feature>
<feature type="binding site" evidence="4 11 12">
    <location>
        <position position="263"/>
    </location>
    <ligand>
        <name>pyrroloquinoline quinone</name>
        <dbReference type="ChEBI" id="CHEBI:58442"/>
    </ligand>
</feature>
<feature type="binding site" evidence="4 11 12">
    <location>
        <position position="281"/>
    </location>
    <ligand>
        <name>Pr(3+)</name>
        <dbReference type="ChEBI" id="CHEBI:229784"/>
    </ligand>
</feature>
<feature type="binding site" evidence="4 11 12">
    <location>
        <position position="323"/>
    </location>
    <ligand>
        <name>Pr(3+)</name>
        <dbReference type="ChEBI" id="CHEBI:229784"/>
    </ligand>
</feature>
<feature type="binding site" evidence="4 11 12">
    <location>
        <position position="325"/>
    </location>
    <ligand>
        <name>Pr(3+)</name>
        <dbReference type="ChEBI" id="CHEBI:229784"/>
    </ligand>
</feature>
<feature type="binding site" evidence="4 11 12">
    <location>
        <position position="350"/>
    </location>
    <ligand>
        <name>pyrroloquinoline quinone</name>
        <dbReference type="ChEBI" id="CHEBI:58442"/>
    </ligand>
</feature>
<feature type="binding site" evidence="4 11 12">
    <location>
        <position position="417"/>
    </location>
    <ligand>
        <name>pyrroloquinoline quinone</name>
        <dbReference type="ChEBI" id="CHEBI:58442"/>
    </ligand>
</feature>
<feature type="binding site" evidence="4 11 12">
    <location>
        <position position="493"/>
    </location>
    <ligand>
        <name>pyrroloquinoline quinone</name>
        <dbReference type="ChEBI" id="CHEBI:58442"/>
    </ligand>
</feature>
<feature type="binding site" evidence="4 11 12">
    <location>
        <position position="557"/>
    </location>
    <ligand>
        <name>pyrroloquinoline quinone</name>
        <dbReference type="ChEBI" id="CHEBI:58442"/>
    </ligand>
</feature>
<feature type="disulfide bond" evidence="4 11">
    <location>
        <begin position="131"/>
        <end position="132"/>
    </location>
</feature>
<feature type="mutagenesis site" description="In contrast to wild-type, this mutant is able to oxidize 5-(hydroxymethyl)furoic acid (HMFA) into 5-formylfuroic acid (FFA); when associated with Ser-561 or Gln-561." evidence="4">
    <original>F</original>
    <variation>I</variation>
    <location>
        <position position="412"/>
    </location>
</feature>
<feature type="mutagenesis site" description="High decrease in affinity for ethanol, and in contrast to wild-type, this mutant is able to oxidize 5-(hydroxymethyl)furoic acid (HMFA) into 5-formylfuroic acid (FFA) and can also oxidize 5-(hydroxymethyl)furfural (HMF) and 5-formylfurfural (FFF); when associated with Ala-561." evidence="4">
    <original>F</original>
    <variation>V</variation>
    <location>
        <position position="412"/>
    </location>
</feature>
<feature type="mutagenesis site" description="High decrease in affinity for ethanol, and in contrast to wild-type, this mutant is able to oxidize 5-(hydroxymethyl)furoic acid (HMFA) into 5-formylfuroic acid (FFA) and can also oxidize 5-(hydroxymethyl)furfural (HMF) and 5-formylfurfural (FFF); when associated with Val-412." evidence="4">
    <original>W</original>
    <variation>A</variation>
    <location>
        <position position="561"/>
    </location>
</feature>
<feature type="mutagenesis site" description="In contrast to wild-type, this mutant is able to oxidize 5-(hydroxymethyl)furoic acid (HMFA) into 5-formylfuroic acid (FFA); when associated with Ile-412." evidence="4">
    <original>W</original>
    <variation>S</variation>
    <variation>Q</variation>
    <location>
        <position position="561"/>
    </location>
</feature>
<feature type="helix" evidence="13">
    <location>
        <begin position="31"/>
        <end position="36"/>
    </location>
</feature>
<feature type="turn" evidence="13">
    <location>
        <begin position="64"/>
        <end position="66"/>
    </location>
</feature>
<feature type="helix" evidence="13">
    <location>
        <begin position="67"/>
        <end position="69"/>
    </location>
</feature>
<feature type="strand" evidence="13">
    <location>
        <begin position="71"/>
        <end position="77"/>
    </location>
</feature>
<feature type="strand" evidence="13">
    <location>
        <begin position="91"/>
        <end position="93"/>
    </location>
</feature>
<feature type="strand" evidence="13">
    <location>
        <begin position="96"/>
        <end position="101"/>
    </location>
</feature>
<feature type="turn" evidence="13">
    <location>
        <begin position="102"/>
        <end position="104"/>
    </location>
</feature>
<feature type="strand" evidence="13">
    <location>
        <begin position="105"/>
        <end position="110"/>
    </location>
</feature>
<feature type="turn" evidence="13">
    <location>
        <begin position="111"/>
        <end position="113"/>
    </location>
</feature>
<feature type="strand" evidence="13">
    <location>
        <begin position="116"/>
        <end position="121"/>
    </location>
</feature>
<feature type="strand" evidence="13">
    <location>
        <begin position="140"/>
        <end position="143"/>
    </location>
</feature>
<feature type="strand" evidence="13">
    <location>
        <begin position="145"/>
        <end position="149"/>
    </location>
</feature>
<feature type="strand" evidence="13">
    <location>
        <begin position="153"/>
        <end position="159"/>
    </location>
</feature>
<feature type="turn" evidence="13">
    <location>
        <begin position="160"/>
        <end position="162"/>
    </location>
</feature>
<feature type="strand" evidence="13">
    <location>
        <begin position="165"/>
        <end position="170"/>
    </location>
</feature>
<feature type="helix" evidence="13">
    <location>
        <begin position="174"/>
        <end position="176"/>
    </location>
</feature>
<feature type="strand" evidence="13">
    <location>
        <begin position="185"/>
        <end position="187"/>
    </location>
</feature>
<feature type="strand" evidence="13">
    <location>
        <begin position="190"/>
        <end position="193"/>
    </location>
</feature>
<feature type="helix" evidence="13">
    <location>
        <begin position="198"/>
        <end position="200"/>
    </location>
</feature>
<feature type="strand" evidence="13">
    <location>
        <begin position="205"/>
        <end position="209"/>
    </location>
</feature>
<feature type="turn" evidence="13">
    <location>
        <begin position="211"/>
        <end position="213"/>
    </location>
</feature>
<feature type="strand" evidence="13">
    <location>
        <begin position="216"/>
        <end position="223"/>
    </location>
</feature>
<feature type="strand" evidence="13">
    <location>
        <begin position="227"/>
        <end position="232"/>
    </location>
</feature>
<feature type="strand" evidence="13">
    <location>
        <begin position="235"/>
        <end position="241"/>
    </location>
</feature>
<feature type="strand" evidence="13">
    <location>
        <begin position="248"/>
        <end position="250"/>
    </location>
</feature>
<feature type="helix" evidence="13">
    <location>
        <begin position="254"/>
        <end position="257"/>
    </location>
</feature>
<feature type="strand" evidence="13">
    <location>
        <begin position="266"/>
        <end position="269"/>
    </location>
</feature>
<feature type="turn" evidence="13">
    <location>
        <begin position="270"/>
        <end position="273"/>
    </location>
</feature>
<feature type="strand" evidence="13">
    <location>
        <begin position="274"/>
        <end position="279"/>
    </location>
</feature>
<feature type="strand" evidence="13">
    <location>
        <begin position="282"/>
        <end position="285"/>
    </location>
</feature>
<feature type="helix" evidence="13">
    <location>
        <begin position="287"/>
        <end position="289"/>
    </location>
</feature>
<feature type="turn" evidence="13">
    <location>
        <begin position="295"/>
        <end position="298"/>
    </location>
</feature>
<feature type="strand" evidence="13">
    <location>
        <begin position="299"/>
        <end position="303"/>
    </location>
</feature>
<feature type="turn" evidence="13">
    <location>
        <begin position="305"/>
        <end position="307"/>
    </location>
</feature>
<feature type="strand" evidence="13">
    <location>
        <begin position="310"/>
        <end position="317"/>
    </location>
</feature>
<feature type="strand" evidence="13">
    <location>
        <begin position="331"/>
        <end position="339"/>
    </location>
</feature>
<feature type="strand" evidence="13">
    <location>
        <begin position="341"/>
        <end position="348"/>
    </location>
</feature>
<feature type="strand" evidence="13">
    <location>
        <begin position="352"/>
        <end position="358"/>
    </location>
</feature>
<feature type="turn" evidence="13">
    <location>
        <begin position="359"/>
        <end position="361"/>
    </location>
</feature>
<feature type="strand" evidence="13">
    <location>
        <begin position="364"/>
        <end position="372"/>
    </location>
</feature>
<feature type="strand" evidence="13">
    <location>
        <begin position="376"/>
        <end position="380"/>
    </location>
</feature>
<feature type="strand" evidence="13">
    <location>
        <begin position="386"/>
        <end position="388"/>
    </location>
</feature>
<feature type="helix" evidence="13">
    <location>
        <begin position="390"/>
        <end position="392"/>
    </location>
</feature>
<feature type="strand" evidence="13">
    <location>
        <begin position="400"/>
        <end position="402"/>
    </location>
</feature>
<feature type="strand" evidence="13">
    <location>
        <begin position="406"/>
        <end position="410"/>
    </location>
</feature>
<feature type="strand" evidence="13">
    <location>
        <begin position="422"/>
        <end position="424"/>
    </location>
</feature>
<feature type="turn" evidence="13">
    <location>
        <begin position="425"/>
        <end position="428"/>
    </location>
</feature>
<feature type="strand" evidence="13">
    <location>
        <begin position="429"/>
        <end position="435"/>
    </location>
</feature>
<feature type="strand" evidence="13">
    <location>
        <begin position="437"/>
        <end position="444"/>
    </location>
</feature>
<feature type="strand" evidence="13">
    <location>
        <begin position="457"/>
        <end position="467"/>
    </location>
</feature>
<feature type="strand" evidence="13">
    <location>
        <begin position="469"/>
        <end position="476"/>
    </location>
</feature>
<feature type="turn" evidence="13">
    <location>
        <begin position="477"/>
        <end position="480"/>
    </location>
</feature>
<feature type="strand" evidence="13">
    <location>
        <begin position="481"/>
        <end position="490"/>
    </location>
</feature>
<feature type="strand" evidence="13">
    <location>
        <begin position="496"/>
        <end position="499"/>
    </location>
</feature>
<feature type="turn" evidence="13">
    <location>
        <begin position="500"/>
        <end position="502"/>
    </location>
</feature>
<feature type="strand" evidence="13">
    <location>
        <begin position="503"/>
        <end position="507"/>
    </location>
</feature>
<feature type="strand" evidence="13">
    <location>
        <begin position="511"/>
        <end position="517"/>
    </location>
</feature>
<feature type="turn" evidence="13">
    <location>
        <begin position="518"/>
        <end position="520"/>
    </location>
</feature>
<feature type="strand" evidence="13">
    <location>
        <begin position="523"/>
        <end position="528"/>
    </location>
</feature>
<feature type="strand" evidence="13">
    <location>
        <begin position="538"/>
        <end position="542"/>
    </location>
</feature>
<feature type="strand" evidence="13">
    <location>
        <begin position="545"/>
        <end position="552"/>
    </location>
</feature>
<feature type="helix" evidence="13">
    <location>
        <begin position="558"/>
        <end position="561"/>
    </location>
</feature>
<feature type="helix" evidence="13">
    <location>
        <begin position="563"/>
        <end position="568"/>
    </location>
</feature>
<feature type="turn" evidence="13">
    <location>
        <begin position="569"/>
        <end position="571"/>
    </location>
</feature>
<feature type="strand" evidence="13">
    <location>
        <begin position="577"/>
        <end position="582"/>
    </location>
</feature>
<feature type="helix" evidence="13">
    <location>
        <begin position="585"/>
        <end position="587"/>
    </location>
</feature>
<gene>
    <name evidence="5 6" type="primary">pedH</name>
    <name evidence="10" type="synonym">qedH-II</name>
    <name evidence="10" type="ordered locus">PP_2679</name>
</gene>
<comment type="function">
    <text evidence="1 3">Alcohol dehydrogenase that catalyzes the oxidation of a range of substrates, including linear and aromatic primary and secondary alcohols, as well as aldehydes, but only in the presence of lanthanides, allowing bacterial growth with a variety of volatile organic compounds (VOCs) as carbon and energy sources. Is also involved in the transcriptional regulation of pedE and pedH, most likely acting as a lanthanide sensory module (PubMed:28655819). Uses a specific inducible cytochrome c550, encoded by the adjacent gene in the locus, as electron acceptor (By similarity).</text>
</comment>
<comment type="catalytic activity">
    <reaction evidence="8 9">
        <text>a primary alcohol + 2 Fe(III)-[cytochrome c] = an aldehyde + 2 Fe(II)-[cytochrome c] + 2 H(+)</text>
        <dbReference type="Rhea" id="RHEA:51020"/>
        <dbReference type="Rhea" id="RHEA-COMP:10350"/>
        <dbReference type="Rhea" id="RHEA-COMP:14399"/>
        <dbReference type="ChEBI" id="CHEBI:15378"/>
        <dbReference type="ChEBI" id="CHEBI:15734"/>
        <dbReference type="ChEBI" id="CHEBI:17478"/>
        <dbReference type="ChEBI" id="CHEBI:29033"/>
        <dbReference type="ChEBI" id="CHEBI:29034"/>
    </reaction>
    <physiologicalReaction direction="left-to-right" evidence="3">
        <dbReference type="Rhea" id="RHEA:51021"/>
    </physiologicalReaction>
</comment>
<comment type="catalytic activity">
    <reaction evidence="8 9">
        <text>ethanol + 2 Fe(III)-[cytochrome c] = acetaldehyde + 2 Fe(II)-[cytochrome c] + 2 H(+)</text>
        <dbReference type="Rhea" id="RHEA:62200"/>
        <dbReference type="Rhea" id="RHEA-COMP:10350"/>
        <dbReference type="Rhea" id="RHEA-COMP:14399"/>
        <dbReference type="ChEBI" id="CHEBI:15343"/>
        <dbReference type="ChEBI" id="CHEBI:15378"/>
        <dbReference type="ChEBI" id="CHEBI:16236"/>
        <dbReference type="ChEBI" id="CHEBI:29033"/>
        <dbReference type="ChEBI" id="CHEBI:29034"/>
    </reaction>
    <physiologicalReaction direction="left-to-right" evidence="3">
        <dbReference type="Rhea" id="RHEA:62201"/>
    </physiologicalReaction>
</comment>
<comment type="catalytic activity">
    <reaction evidence="8">
        <text>butan-1-ol + 2 Fe(III)-[cytochrome c] = butanal + 2 Fe(II)-[cytochrome c] + 2 H(+)</text>
        <dbReference type="Rhea" id="RHEA:43432"/>
        <dbReference type="Rhea" id="RHEA-COMP:10350"/>
        <dbReference type="Rhea" id="RHEA-COMP:14399"/>
        <dbReference type="ChEBI" id="CHEBI:15378"/>
        <dbReference type="ChEBI" id="CHEBI:15743"/>
        <dbReference type="ChEBI" id="CHEBI:28885"/>
        <dbReference type="ChEBI" id="CHEBI:29033"/>
        <dbReference type="ChEBI" id="CHEBI:29034"/>
    </reaction>
    <physiologicalReaction direction="left-to-right" evidence="3">
        <dbReference type="Rhea" id="RHEA:43433"/>
    </physiologicalReaction>
</comment>
<comment type="catalytic activity">
    <reaction evidence="8">
        <text>butan-2-ol + 2 Fe(III)-[cytochrome c] = butan-2-one + 2 Fe(II)-[cytochrome c] + 2 H(+)</text>
        <dbReference type="Rhea" id="RHEA:79327"/>
        <dbReference type="Rhea" id="RHEA-COMP:10350"/>
        <dbReference type="Rhea" id="RHEA-COMP:14399"/>
        <dbReference type="ChEBI" id="CHEBI:15378"/>
        <dbReference type="ChEBI" id="CHEBI:28398"/>
        <dbReference type="ChEBI" id="CHEBI:29033"/>
        <dbReference type="ChEBI" id="CHEBI:29034"/>
        <dbReference type="ChEBI" id="CHEBI:35687"/>
    </reaction>
    <physiologicalReaction direction="left-to-right" evidence="8">
        <dbReference type="Rhea" id="RHEA:79328"/>
    </physiologicalReaction>
</comment>
<comment type="catalytic activity">
    <reaction evidence="8">
        <text>2-phenylethanol + 2 Fe(III)-[cytochrome c] = 2-phenylacetaldehyde + 2 Fe(II)-[cytochrome c] + 2 H(+)</text>
        <dbReference type="Rhea" id="RHEA:79319"/>
        <dbReference type="Rhea" id="RHEA-COMP:10350"/>
        <dbReference type="Rhea" id="RHEA-COMP:14399"/>
        <dbReference type="ChEBI" id="CHEBI:15378"/>
        <dbReference type="ChEBI" id="CHEBI:16424"/>
        <dbReference type="ChEBI" id="CHEBI:29033"/>
        <dbReference type="ChEBI" id="CHEBI:29034"/>
        <dbReference type="ChEBI" id="CHEBI:49000"/>
    </reaction>
    <physiologicalReaction direction="left-to-right" evidence="3">
        <dbReference type="Rhea" id="RHEA:79320"/>
    </physiologicalReaction>
</comment>
<comment type="catalytic activity">
    <reaction evidence="8">
        <text>octan-1-ol + 2 Fe(III)-[cytochrome c] = octanal + 2 Fe(II)-[cytochrome c] + 2 H(+)</text>
        <dbReference type="Rhea" id="RHEA:79323"/>
        <dbReference type="Rhea" id="RHEA-COMP:10350"/>
        <dbReference type="Rhea" id="RHEA-COMP:14399"/>
        <dbReference type="ChEBI" id="CHEBI:15378"/>
        <dbReference type="ChEBI" id="CHEBI:16188"/>
        <dbReference type="ChEBI" id="CHEBI:17935"/>
        <dbReference type="ChEBI" id="CHEBI:29033"/>
        <dbReference type="ChEBI" id="CHEBI:29034"/>
    </reaction>
    <physiologicalReaction direction="left-to-right" evidence="3">
        <dbReference type="Rhea" id="RHEA:79324"/>
    </physiologicalReaction>
</comment>
<comment type="catalytic activity">
    <reaction evidence="8">
        <text>hexan-1-ol + 2 Fe(III)-[cytochrome c] = hexanal + 2 Fe(II)-[cytochrome c] + 2 H(+)</text>
        <dbReference type="Rhea" id="RHEA:79331"/>
        <dbReference type="Rhea" id="RHEA-COMP:10350"/>
        <dbReference type="Rhea" id="RHEA-COMP:14399"/>
        <dbReference type="ChEBI" id="CHEBI:15378"/>
        <dbReference type="ChEBI" id="CHEBI:29033"/>
        <dbReference type="ChEBI" id="CHEBI:29034"/>
        <dbReference type="ChEBI" id="CHEBI:87393"/>
        <dbReference type="ChEBI" id="CHEBI:88528"/>
    </reaction>
    <physiologicalReaction direction="left-to-right" evidence="8">
        <dbReference type="Rhea" id="RHEA:79332"/>
    </physiologicalReaction>
</comment>
<comment type="catalytic activity">
    <reaction evidence="8">
        <text>cinnamyl alcohol + 2 Fe(III)-[cytochrome c] = cinnamaldehyde + 2 Fe(II)-[cytochrome c] + 2 H(+)</text>
        <dbReference type="Rhea" id="RHEA:79335"/>
        <dbReference type="Rhea" id="RHEA-COMP:10350"/>
        <dbReference type="Rhea" id="RHEA-COMP:14399"/>
        <dbReference type="ChEBI" id="CHEBI:15378"/>
        <dbReference type="ChEBI" id="CHEBI:17177"/>
        <dbReference type="ChEBI" id="CHEBI:29033"/>
        <dbReference type="ChEBI" id="CHEBI:29034"/>
        <dbReference type="ChEBI" id="CHEBI:142921"/>
    </reaction>
    <physiologicalReaction direction="left-to-right" evidence="8">
        <dbReference type="Rhea" id="RHEA:79336"/>
    </physiologicalReaction>
</comment>
<comment type="catalytic activity">
    <reaction evidence="8">
        <text>farnesol + 2 Fe(III)-[cytochrome c] = farnesal + 2 Fe(II)-[cytochrome c] + 2 H(+)</text>
        <dbReference type="Rhea" id="RHEA:79359"/>
        <dbReference type="Rhea" id="RHEA-COMP:10350"/>
        <dbReference type="Rhea" id="RHEA-COMP:14399"/>
        <dbReference type="ChEBI" id="CHEBI:15378"/>
        <dbReference type="ChEBI" id="CHEBI:24012"/>
        <dbReference type="ChEBI" id="CHEBI:28600"/>
        <dbReference type="ChEBI" id="CHEBI:29033"/>
        <dbReference type="ChEBI" id="CHEBI:29034"/>
    </reaction>
    <physiologicalReaction direction="left-to-right" evidence="8">
        <dbReference type="Rhea" id="RHEA:79360"/>
    </physiologicalReaction>
</comment>
<comment type="catalytic activity">
    <reaction evidence="8">
        <text>an aldehyde + 2 Fe(III)-[cytochrome c] + H2O = a carboxylate + 2 Fe(II)-[cytochrome c] + 3 H(+)</text>
        <dbReference type="Rhea" id="RHEA:79339"/>
        <dbReference type="Rhea" id="RHEA-COMP:10350"/>
        <dbReference type="Rhea" id="RHEA-COMP:14399"/>
        <dbReference type="ChEBI" id="CHEBI:15377"/>
        <dbReference type="ChEBI" id="CHEBI:15378"/>
        <dbReference type="ChEBI" id="CHEBI:17478"/>
        <dbReference type="ChEBI" id="CHEBI:29033"/>
        <dbReference type="ChEBI" id="CHEBI:29034"/>
        <dbReference type="ChEBI" id="CHEBI:29067"/>
    </reaction>
    <physiologicalReaction direction="left-to-right" evidence="8">
        <dbReference type="Rhea" id="RHEA:79340"/>
    </physiologicalReaction>
</comment>
<comment type="catalytic activity">
    <reaction evidence="8">
        <text>acetaldehyde + 2 Fe(III)-[cytochrome c] + H2O = 2 Fe(II)-[cytochrome c] + acetate + 3 H(+)</text>
        <dbReference type="Rhea" id="RHEA:79343"/>
        <dbReference type="Rhea" id="RHEA-COMP:10350"/>
        <dbReference type="Rhea" id="RHEA-COMP:14399"/>
        <dbReference type="ChEBI" id="CHEBI:15343"/>
        <dbReference type="ChEBI" id="CHEBI:15377"/>
        <dbReference type="ChEBI" id="CHEBI:15378"/>
        <dbReference type="ChEBI" id="CHEBI:29033"/>
        <dbReference type="ChEBI" id="CHEBI:29034"/>
        <dbReference type="ChEBI" id="CHEBI:30089"/>
    </reaction>
    <physiologicalReaction direction="left-to-right" evidence="8">
        <dbReference type="Rhea" id="RHEA:79344"/>
    </physiologicalReaction>
</comment>
<comment type="catalytic activity">
    <reaction evidence="8">
        <text>butanal + 2 Fe(III)-[cytochrome c] + H2O = butanoate + 2 Fe(II)-[cytochrome c] + 3 H(+)</text>
        <dbReference type="Rhea" id="RHEA:79347"/>
        <dbReference type="Rhea" id="RHEA-COMP:10350"/>
        <dbReference type="Rhea" id="RHEA-COMP:14399"/>
        <dbReference type="ChEBI" id="CHEBI:15377"/>
        <dbReference type="ChEBI" id="CHEBI:15378"/>
        <dbReference type="ChEBI" id="CHEBI:15743"/>
        <dbReference type="ChEBI" id="CHEBI:17968"/>
        <dbReference type="ChEBI" id="CHEBI:29033"/>
        <dbReference type="ChEBI" id="CHEBI:29034"/>
    </reaction>
    <physiologicalReaction direction="left-to-right" evidence="8">
        <dbReference type="Rhea" id="RHEA:79348"/>
    </physiologicalReaction>
</comment>
<comment type="catalytic activity">
    <reaction evidence="8">
        <text>hexanal + 2 Fe(III)-[cytochrome c] + H2O = hexanoate + 2 Fe(II)-[cytochrome c] + 3 H(+)</text>
        <dbReference type="Rhea" id="RHEA:79351"/>
        <dbReference type="Rhea" id="RHEA-COMP:10350"/>
        <dbReference type="Rhea" id="RHEA-COMP:14399"/>
        <dbReference type="ChEBI" id="CHEBI:15377"/>
        <dbReference type="ChEBI" id="CHEBI:15378"/>
        <dbReference type="ChEBI" id="CHEBI:17120"/>
        <dbReference type="ChEBI" id="CHEBI:29033"/>
        <dbReference type="ChEBI" id="CHEBI:29034"/>
        <dbReference type="ChEBI" id="CHEBI:88528"/>
    </reaction>
    <physiologicalReaction direction="left-to-right" evidence="8">
        <dbReference type="Rhea" id="RHEA:79352"/>
    </physiologicalReaction>
</comment>
<comment type="catalytic activity">
    <reaction evidence="8">
        <text>octanal + 2 Fe(III)-[cytochrome c] + H2O = octanoate + 2 Fe(II)-[cytochrome c] + 3 H(+)</text>
        <dbReference type="Rhea" id="RHEA:79355"/>
        <dbReference type="Rhea" id="RHEA-COMP:10350"/>
        <dbReference type="Rhea" id="RHEA-COMP:14399"/>
        <dbReference type="ChEBI" id="CHEBI:15377"/>
        <dbReference type="ChEBI" id="CHEBI:15378"/>
        <dbReference type="ChEBI" id="CHEBI:17935"/>
        <dbReference type="ChEBI" id="CHEBI:25646"/>
        <dbReference type="ChEBI" id="CHEBI:29033"/>
        <dbReference type="ChEBI" id="CHEBI:29034"/>
    </reaction>
    <physiologicalReaction direction="left-to-right" evidence="8">
        <dbReference type="Rhea" id="RHEA:79356"/>
    </physiologicalReaction>
</comment>
<comment type="cofactor">
    <cofactor evidence="3 4">
        <name>Pr(3+)</name>
        <dbReference type="ChEBI" id="CHEBI:229784"/>
    </cofactor>
    <cofactor evidence="3">
        <name>Nd(3+)</name>
        <dbReference type="ChEBI" id="CHEBI:229785"/>
    </cofactor>
    <cofactor evidence="3">
        <name>La(3+)</name>
        <dbReference type="ChEBI" id="CHEBI:49701"/>
    </cofactor>
    <cofactor evidence="3">
        <name>Ce(3+)</name>
        <dbReference type="ChEBI" id="CHEBI:48782"/>
    </cofactor>
    <cofactor evidence="3">
        <name>Sm(3+)</name>
        <dbReference type="ChEBI" id="CHEBI:49890"/>
    </cofactor>
    <text evidence="3">Exhibits enzymatic activity only in the presence of lanthanide ions; maximal activity is observed with Pr(3+) and Nd(3+), and the activity decreases gradually with lanthanides with atomic masses higher than that of Nd(3+). PedH activity is found with lanthanide concentrations as low as 10 nM and up to 100 uM, with a peak in activity at 1 uM.</text>
</comment>
<comment type="cofactor">
    <cofactor evidence="3 4">
        <name>pyrroloquinoline quinone</name>
        <dbReference type="ChEBI" id="CHEBI:58442"/>
    </cofactor>
    <text evidence="4">Binds 1 PQQ group per subunit.</text>
</comment>
<comment type="biophysicochemical properties">
    <kinetics>
        <KM evidence="3">177 uM for ethanol</KM>
        <KM evidence="3">2261 uM for acetaldehyde</KM>
        <KM evidence="3">329 uM for 2-phenylethanol</KM>
        <KM evidence="4">0.016 mM for ethanol</KM>
        <Vmax evidence="3">10.6 umol/min/mg enzyme with ethanol as substrate using artificial electron acceptor</Vmax>
        <Vmax evidence="3">8.4 umol/min/mg enzyme with acetaldehyde as substrate using artificial electron acceptor</Vmax>
        <Vmax evidence="3">11.8 umol/min/mg enzyme with 2-phenylethanol as substrate using artificial electron acceptor</Vmax>
        <text evidence="4">kcat is 5.0 sec(-1) with ethanol as substrate using artificial electron acceptor.</text>
    </kinetics>
</comment>
<comment type="subcellular location">
    <subcellularLocation>
        <location evidence="8 9">Periplasm</location>
    </subcellularLocation>
</comment>
<comment type="induction">
    <text evidence="3">Induced in the presence of lanthanides. The underlying regulatory network is responsive to as little as 1 to 10 nM lanthanum, a concentration assumed to be of ecological relevance.</text>
</comment>
<comment type="PTM">
    <text evidence="1">The disulfide ring formed between the two adjacent cysteine residues Cys-131 and Cys-132 is essential for efficient electron transfer at pH 7 from PedH to its natural electron acceptor cytochrome c550.</text>
</comment>
<comment type="disruption phenotype">
    <text evidence="3">Cells lacking this gene grow efficiently with ethanol, 1-butanol, and 2-phenylethanol in the absence of La(3+), like wild-type strain, and the addition of 20 uM La(3+) to the agar medium restricts the growth of the mutant strain. Cells lacking both pedE and pedH show no growth under both conditions.</text>
</comment>
<comment type="biotechnology">
    <text evidence="4">Is an attractive biocatalyst for the oxidation of 5-(hydroxymethyl)furoic acid (HMFA) into 5-formylfuroic acid (FFA), a key reaction within the biocatalytic route toward furan-2,5-dicarboxylic acid (FDCA) production. FDCA is a bio-based platform chemical with the potential to replace terephthalic acid in the production of polymers.</text>
</comment>
<comment type="miscellaneous">
    <text evidence="3">The soil-dwelling organism P.putida KT2440 produces 2 PQQ-ADHs, namely, PedE, which is Ca(2+)-dependent, and PedH, which is lanthanide-dependent. These enzymes are crucial for efficient bacterial growth with a variety of volatile alcohols. The functional redundancy of the PQQ-ADHs and inverse transcriptional regulation of PedE and PedH represent an adaptive strategy of P.putida KT2440 to optimize growth with volatile alcohols and aldehyde substrates in response to the availability of different lanthanides in the natural environment of the bacterium.</text>
</comment>
<comment type="similarity">
    <text evidence="7">Belongs to the bacterial PQQ dehydrogenase family.</text>
</comment>
<organism>
    <name type="scientific">Pseudomonas putida (strain ATCC 47054 / DSM 6125 / CFBP 8728 / NCIMB 11950 / KT2440)</name>
    <dbReference type="NCBI Taxonomy" id="160488"/>
    <lineage>
        <taxon>Bacteria</taxon>
        <taxon>Pseudomonadati</taxon>
        <taxon>Pseudomonadota</taxon>
        <taxon>Gammaproteobacteria</taxon>
        <taxon>Pseudomonadales</taxon>
        <taxon>Pseudomonadaceae</taxon>
        <taxon>Pseudomonas</taxon>
    </lineage>
</organism>
<keyword id="KW-0002">3D-structure</keyword>
<keyword id="KW-1015">Disulfide bond</keyword>
<keyword id="KW-0479">Metal-binding</keyword>
<keyword id="KW-0560">Oxidoreductase</keyword>
<keyword id="KW-0574">Periplasm</keyword>
<keyword id="KW-0634">PQQ</keyword>
<keyword id="KW-1185">Reference proteome</keyword>
<keyword id="KW-0732">Signal</keyword>
<evidence type="ECO:0000250" key="1">
    <source>
        <dbReference type="UniProtKB" id="Q9Z4J7"/>
    </source>
</evidence>
<evidence type="ECO:0000255" key="2"/>
<evidence type="ECO:0000269" key="3">
    <source>
    </source>
</evidence>
<evidence type="ECO:0000269" key="4">
    <source ref="3"/>
</evidence>
<evidence type="ECO:0000303" key="5">
    <source>
    </source>
</evidence>
<evidence type="ECO:0000303" key="6">
    <source ref="3"/>
</evidence>
<evidence type="ECO:0000305" key="7"/>
<evidence type="ECO:0000305" key="8">
    <source>
    </source>
</evidence>
<evidence type="ECO:0000305" key="9">
    <source ref="3"/>
</evidence>
<evidence type="ECO:0000312" key="10">
    <source>
        <dbReference type="EMBL" id="AAN68287.1"/>
    </source>
</evidence>
<evidence type="ECO:0007744" key="11">
    <source>
        <dbReference type="PDB" id="6ZCV"/>
    </source>
</evidence>
<evidence type="ECO:0007744" key="12">
    <source>
        <dbReference type="PDB" id="6ZCW"/>
    </source>
</evidence>
<evidence type="ECO:0007829" key="13">
    <source>
        <dbReference type="PDB" id="6ZCW"/>
    </source>
</evidence>
<sequence length="595" mass="64884">MTRSPRRPLFAVSLVLSAMLLAGAAHAAVSNEEILQDPKNPQQIVTNGLGVQGQRYSPLDLLNVNNVKELRPVWAFSFGGEKQRGQQAQPLIKDGVMYLTGSYSRVFAVDARTGKKLWQYDARLPDDIRPCCDVINRGVALYGNLVFFGTLDAKLVALNKDTGKVVWSKKVADHKEGYSISAAPMIVNGKLITGVAGGEFGVVGKIQAYNPENGELLWMRPTVEGHMGYVYKDGKAIENGISGGEAGKTWPGDLWKTGGAAPWLGGYYDPETNLILFGTGNPAPWNSHLRPGDNLYSSSRLALNPDDGTIKWHFQSTPHDGWDFDGVNELISFNYKDGGKEVKAAATADRNGFFYVLDRTNGKFIRGFPFVDKITWATGLDKDGRPIYNDASRPGAPGSEAKGSSVFVAPAFLGAKNWMPMAYNKDTGLFYVPSNEWGMDIWNEGIAYKKGAAFLGAGFTIKPLNEDYIGVLRAIDPVSGKEVWRHKNYAPLWGGVLTTKGNLVFTGTPEGFLQAFNAKTGDKVWEFQTGSGVLGSPVTWEMDGEQYVSVVSGWGGAVPLWGGEVAKRVKDFNQGGMLWTFKLPKQLQQTASVKP</sequence>
<protein>
    <recommendedName>
        <fullName evidence="8 9">Quinoprotein alcohol dehydrogenase PedH</fullName>
        <ecNumber evidence="8 9">1.1.2.-</ecNumber>
    </recommendedName>
    <alternativeName>
        <fullName evidence="5">Lanthanide-dependent pyrroloquinoline quinone-dependent alcohol dehydrogenase</fullName>
        <shortName evidence="5">Lanthanide-dependent PQQ-ADH</shortName>
    </alternativeName>
</protein>